<gene>
    <name evidence="1" type="primary">truA</name>
    <name type="ordered locus">M6_Spy1625</name>
</gene>
<keyword id="KW-0413">Isomerase</keyword>
<keyword id="KW-0819">tRNA processing</keyword>
<dbReference type="EC" id="5.4.99.12" evidence="1"/>
<dbReference type="EMBL" id="CP000003">
    <property type="protein sequence ID" value="AAT87760.1"/>
    <property type="molecule type" value="Genomic_DNA"/>
</dbReference>
<dbReference type="RefSeq" id="WP_002988132.1">
    <property type="nucleotide sequence ID" value="NC_006086.1"/>
</dbReference>
<dbReference type="SMR" id="Q5XA03"/>
<dbReference type="KEGG" id="spa:M6_Spy1625"/>
<dbReference type="HOGENOM" id="CLU_014673_0_1_9"/>
<dbReference type="Proteomes" id="UP000001167">
    <property type="component" value="Chromosome"/>
</dbReference>
<dbReference type="GO" id="GO:0003723">
    <property type="term" value="F:RNA binding"/>
    <property type="evidence" value="ECO:0007669"/>
    <property type="project" value="InterPro"/>
</dbReference>
<dbReference type="GO" id="GO:0160147">
    <property type="term" value="F:tRNA pseudouridine(38-40) synthase activity"/>
    <property type="evidence" value="ECO:0007669"/>
    <property type="project" value="UniProtKB-EC"/>
</dbReference>
<dbReference type="GO" id="GO:0031119">
    <property type="term" value="P:tRNA pseudouridine synthesis"/>
    <property type="evidence" value="ECO:0007669"/>
    <property type="project" value="UniProtKB-UniRule"/>
</dbReference>
<dbReference type="CDD" id="cd02570">
    <property type="entry name" value="PseudoU_synth_EcTruA"/>
    <property type="match status" value="1"/>
</dbReference>
<dbReference type="FunFam" id="3.30.70.580:FF:000001">
    <property type="entry name" value="tRNA pseudouridine synthase A"/>
    <property type="match status" value="1"/>
</dbReference>
<dbReference type="Gene3D" id="3.30.70.660">
    <property type="entry name" value="Pseudouridine synthase I, catalytic domain, C-terminal subdomain"/>
    <property type="match status" value="1"/>
</dbReference>
<dbReference type="Gene3D" id="3.30.70.580">
    <property type="entry name" value="Pseudouridine synthase I, catalytic domain, N-terminal subdomain"/>
    <property type="match status" value="1"/>
</dbReference>
<dbReference type="HAMAP" id="MF_00171">
    <property type="entry name" value="TruA"/>
    <property type="match status" value="1"/>
</dbReference>
<dbReference type="InterPro" id="IPR020103">
    <property type="entry name" value="PsdUridine_synth_cat_dom_sf"/>
</dbReference>
<dbReference type="InterPro" id="IPR001406">
    <property type="entry name" value="PsdUridine_synth_TruA"/>
</dbReference>
<dbReference type="InterPro" id="IPR020097">
    <property type="entry name" value="PsdUridine_synth_TruA_a/b_dom"/>
</dbReference>
<dbReference type="InterPro" id="IPR020095">
    <property type="entry name" value="PsdUridine_synth_TruA_C"/>
</dbReference>
<dbReference type="InterPro" id="IPR020094">
    <property type="entry name" value="TruA/RsuA/RluB/E/F_N"/>
</dbReference>
<dbReference type="NCBIfam" id="TIGR00071">
    <property type="entry name" value="hisT_truA"/>
    <property type="match status" value="1"/>
</dbReference>
<dbReference type="PANTHER" id="PTHR11142">
    <property type="entry name" value="PSEUDOURIDYLATE SYNTHASE"/>
    <property type="match status" value="1"/>
</dbReference>
<dbReference type="PANTHER" id="PTHR11142:SF0">
    <property type="entry name" value="TRNA PSEUDOURIDINE SYNTHASE-LIKE 1"/>
    <property type="match status" value="1"/>
</dbReference>
<dbReference type="Pfam" id="PF01416">
    <property type="entry name" value="PseudoU_synth_1"/>
    <property type="match status" value="2"/>
</dbReference>
<dbReference type="PIRSF" id="PIRSF001430">
    <property type="entry name" value="tRNA_psdUrid_synth"/>
    <property type="match status" value="1"/>
</dbReference>
<dbReference type="SUPFAM" id="SSF55120">
    <property type="entry name" value="Pseudouridine synthase"/>
    <property type="match status" value="1"/>
</dbReference>
<reference key="1">
    <citation type="journal article" date="2004" name="J. Infect. Dis.">
        <title>Progress toward characterization of the group A Streptococcus metagenome: complete genome sequence of a macrolide-resistant serotype M6 strain.</title>
        <authorList>
            <person name="Banks D.J."/>
            <person name="Porcella S.F."/>
            <person name="Barbian K.D."/>
            <person name="Beres S.B."/>
            <person name="Philips L.E."/>
            <person name="Voyich J.M."/>
            <person name="DeLeo F.R."/>
            <person name="Martin J.M."/>
            <person name="Somerville G.A."/>
            <person name="Musser J.M."/>
        </authorList>
    </citation>
    <scope>NUCLEOTIDE SEQUENCE [LARGE SCALE GENOMIC DNA]</scope>
    <source>
        <strain>ATCC BAA-946 / MGAS10394</strain>
    </source>
</reference>
<sequence length="249" mass="28356">MVRYKATISYDGTLFSGFQRQRHLRTVQEEIEKTLYKLNNGTKIIIHGAGRTDAGVHAYGQVIHFDLPQEQEVEKLRFALDTQTPEDIDVVNIEKVADDFHCRYQKHLKTYEFLVDNGRPKNPMMRHYTTHYPYTLNIKLMQEAINGLVGTHDFTGFTAAGTSVQNKVRTITKATVSRDEKTDFLVFTFSGNGFLYKQVRNMVGTLLKIGNGQMPVEQVKVILSSKNRQLAGPTISGNGLYLKEICYEN</sequence>
<evidence type="ECO:0000255" key="1">
    <source>
        <dbReference type="HAMAP-Rule" id="MF_00171"/>
    </source>
</evidence>
<protein>
    <recommendedName>
        <fullName evidence="1">tRNA pseudouridine synthase A</fullName>
        <ecNumber evidence="1">5.4.99.12</ecNumber>
    </recommendedName>
    <alternativeName>
        <fullName evidence="1">tRNA pseudouridine(38-40) synthase</fullName>
    </alternativeName>
    <alternativeName>
        <fullName evidence="1">tRNA pseudouridylate synthase I</fullName>
    </alternativeName>
    <alternativeName>
        <fullName evidence="1">tRNA-uridine isomerase I</fullName>
    </alternativeName>
</protein>
<feature type="chain" id="PRO_0000057466" description="tRNA pseudouridine synthase A">
    <location>
        <begin position="1"/>
        <end position="249"/>
    </location>
</feature>
<feature type="active site" description="Nucleophile" evidence="1">
    <location>
        <position position="53"/>
    </location>
</feature>
<feature type="binding site" evidence="1">
    <location>
        <position position="111"/>
    </location>
    <ligand>
        <name>substrate</name>
    </ligand>
</feature>
<comment type="function">
    <text evidence="1">Formation of pseudouridine at positions 38, 39 and 40 in the anticodon stem and loop of transfer RNAs.</text>
</comment>
<comment type="catalytic activity">
    <reaction evidence="1">
        <text>uridine(38/39/40) in tRNA = pseudouridine(38/39/40) in tRNA</text>
        <dbReference type="Rhea" id="RHEA:22376"/>
        <dbReference type="Rhea" id="RHEA-COMP:10085"/>
        <dbReference type="Rhea" id="RHEA-COMP:10087"/>
        <dbReference type="ChEBI" id="CHEBI:65314"/>
        <dbReference type="ChEBI" id="CHEBI:65315"/>
        <dbReference type="EC" id="5.4.99.12"/>
    </reaction>
</comment>
<comment type="subunit">
    <text evidence="1">Homodimer.</text>
</comment>
<comment type="similarity">
    <text evidence="1">Belongs to the tRNA pseudouridine synthase TruA family.</text>
</comment>
<name>TRUA_STRP6</name>
<proteinExistence type="inferred from homology"/>
<accession>Q5XA03</accession>
<organism>
    <name type="scientific">Streptococcus pyogenes serotype M6 (strain ATCC BAA-946 / MGAS10394)</name>
    <dbReference type="NCBI Taxonomy" id="286636"/>
    <lineage>
        <taxon>Bacteria</taxon>
        <taxon>Bacillati</taxon>
        <taxon>Bacillota</taxon>
        <taxon>Bacilli</taxon>
        <taxon>Lactobacillales</taxon>
        <taxon>Streptococcaceae</taxon>
        <taxon>Streptococcus</taxon>
    </lineage>
</organism>